<gene>
    <name type="ORF">B ORF A</name>
</gene>
<organismHost>
    <name type="scientific">Homo sapiens</name>
    <name type="common">Human</name>
    <dbReference type="NCBI Taxonomy" id="9606"/>
</organismHost>
<sequence>MVIYCSNSLGAYCKLVINKVAVLLTYFCFVALTNAQFFVSDILVHGKIPPNHLIIQYPSVSRSPRLDTTYPLCESIGVNSRVPLSILFGFLINGTCSPLDMNLETNP</sequence>
<protein>
    <recommendedName>
        <fullName>Uncharacterized 11.8 kDa protein</fullName>
    </recommendedName>
</protein>
<accession>P68473</accession>
<accession>P20541</accession>
<proteinExistence type="predicted"/>
<name>YVBA_VACCC</name>
<feature type="chain" id="PRO_0000099667" description="Uncharacterized 11.8 kDa protein">
    <location>
        <begin position="1"/>
        <end position="107"/>
    </location>
</feature>
<organism>
    <name type="scientific">Vaccinia virus (strain Copenhagen)</name>
    <name type="common">VACV</name>
    <dbReference type="NCBI Taxonomy" id="10249"/>
    <lineage>
        <taxon>Viruses</taxon>
        <taxon>Varidnaviria</taxon>
        <taxon>Bamfordvirae</taxon>
        <taxon>Nucleocytoviricota</taxon>
        <taxon>Pokkesviricetes</taxon>
        <taxon>Chitovirales</taxon>
        <taxon>Poxviridae</taxon>
        <taxon>Chordopoxvirinae</taxon>
        <taxon>Orthopoxvirus</taxon>
        <taxon>Vaccinia virus</taxon>
    </lineage>
</organism>
<dbReference type="EMBL" id="M35027">
    <property type="protein sequence ID" value="AAA48195.1"/>
    <property type="molecule type" value="Genomic_DNA"/>
</dbReference>
<dbReference type="PIR" id="B42529">
    <property type="entry name" value="B42529"/>
</dbReference>
<dbReference type="Proteomes" id="UP000008269">
    <property type="component" value="Segment"/>
</dbReference>
<keyword id="KW-1185">Reference proteome</keyword>
<reference key="1">
    <citation type="journal article" date="1990" name="Virology">
        <title>The complete DNA sequence of vaccinia virus.</title>
        <authorList>
            <person name="Goebel S.J."/>
            <person name="Johnson G.P."/>
            <person name="Perkus M.E."/>
            <person name="Davis S.W."/>
            <person name="Winslow J.P."/>
            <person name="Paoletti E."/>
        </authorList>
    </citation>
    <scope>NUCLEOTIDE SEQUENCE [LARGE SCALE GENOMIC DNA]</scope>
</reference>
<reference key="2">
    <citation type="journal article" date="1990" name="Virology">
        <title>Appendix to 'The complete DNA sequence of vaccinia virus'.</title>
        <authorList>
            <person name="Goebel S.J."/>
            <person name="Johnson G.P."/>
            <person name="Perkus M.E."/>
            <person name="Davis S.W."/>
            <person name="Winslow J.P."/>
            <person name="Paoletti E."/>
        </authorList>
    </citation>
    <scope>COMPLETE GENOME</scope>
</reference>